<feature type="chain" id="PRO_0000168476" description="L-lactate dehydrogenase B chain">
    <location>
        <begin position="1"/>
        <end position="334"/>
    </location>
</feature>
<feature type="active site" description="Proton acceptor" evidence="1">
    <location>
        <position position="194"/>
    </location>
</feature>
<feature type="binding site" evidence="1">
    <location>
        <begin position="30"/>
        <end position="58"/>
    </location>
    <ligand>
        <name>NAD(+)</name>
        <dbReference type="ChEBI" id="CHEBI:57540"/>
    </ligand>
</feature>
<feature type="binding site" evidence="1">
    <location>
        <position position="100"/>
    </location>
    <ligand>
        <name>NAD(+)</name>
        <dbReference type="ChEBI" id="CHEBI:57540"/>
    </ligand>
</feature>
<feature type="binding site" evidence="1">
    <location>
        <position position="107"/>
    </location>
    <ligand>
        <name>substrate</name>
    </ligand>
</feature>
<feature type="binding site" evidence="1">
    <location>
        <position position="139"/>
    </location>
    <ligand>
        <name>NAD(+)</name>
        <dbReference type="ChEBI" id="CHEBI:57540"/>
    </ligand>
</feature>
<feature type="binding site" evidence="1">
    <location>
        <position position="139"/>
    </location>
    <ligand>
        <name>substrate</name>
    </ligand>
</feature>
<feature type="binding site" evidence="1">
    <location>
        <position position="170"/>
    </location>
    <ligand>
        <name>substrate</name>
    </ligand>
</feature>
<feature type="binding site" evidence="1">
    <location>
        <position position="249"/>
    </location>
    <ligand>
        <name>substrate</name>
    </ligand>
</feature>
<feature type="sequence variant" description="In strain: Isolate New Jersey 121A.">
    <original>T</original>
    <variation>P</variation>
    <location>
        <position position="10"/>
    </location>
</feature>
<feature type="sequence variant" description="In strain: Isolate Georgia 2B.">
    <original>L</original>
    <variation>P</variation>
    <location>
        <position position="45"/>
    </location>
</feature>
<feature type="sequence variant" description="In strain: Isolate Nova Scotia 2B.">
    <original>L</original>
    <variation>P</variation>
    <location>
        <position position="49"/>
    </location>
</feature>
<feature type="sequence variant" description="In strain: Isolate New Jersey 137A.">
    <original>Q</original>
    <variation>R</variation>
    <location>
        <position position="112"/>
    </location>
</feature>
<feature type="sequence variant" description="In strain: Isolate New Jersey 137A.">
    <original>N</original>
    <variation>S</variation>
    <location>
        <position position="114"/>
    </location>
</feature>
<feature type="sequence variant" description="In strain: Isolate Maine 2A, Isolate New Jersey 121B, Isolate New Jersey 197B, Isolate Nova Scotia 1A, Isolate Nova Scotia 1B, Isolate Nova Scotia 2A and Isolate Nova Scotia 2B.">
    <original>A</original>
    <variation>S</variation>
    <location>
        <position position="185"/>
    </location>
</feature>
<feature type="sequence variant" description="In strain: Isolate Nova Scotia 1B and Isolate Nova Scotia 2B.">
    <original>E</original>
    <variation>D</variation>
    <location>
        <position position="287"/>
    </location>
</feature>
<feature type="sequence variant" description="In strain: Isolate New Jersey 197B.">
    <original>V</original>
    <variation>L</variation>
    <location>
        <position position="301"/>
    </location>
</feature>
<feature type="sequence variant" description="In strain: Isolate Maine 2A, Isolate New Jersey 137A, Isolate New Jersey 137B, Isolate New Jersey 197B, Isolate Nova Scotia 1A, Isolate Nova Scotia 1B, Isolate Nova Scotia 2A and Isolate Nova Scotia 2B.">
    <original>D</original>
    <variation>A</variation>
    <location>
        <position position="311"/>
    </location>
</feature>
<comment type="function">
    <text evidence="2">Interconverts simultaneously and stereospecifically pyruvate and lactate with concomitant interconversion of NADH and NAD(+).</text>
</comment>
<comment type="catalytic activity">
    <reaction evidence="2">
        <text>(S)-lactate + NAD(+) = pyruvate + NADH + H(+)</text>
        <dbReference type="Rhea" id="RHEA:23444"/>
        <dbReference type="ChEBI" id="CHEBI:15361"/>
        <dbReference type="ChEBI" id="CHEBI:15378"/>
        <dbReference type="ChEBI" id="CHEBI:16651"/>
        <dbReference type="ChEBI" id="CHEBI:57540"/>
        <dbReference type="ChEBI" id="CHEBI:57945"/>
        <dbReference type="EC" id="1.1.1.27"/>
    </reaction>
    <physiologicalReaction direction="left-to-right" evidence="2">
        <dbReference type="Rhea" id="RHEA:23445"/>
    </physiologicalReaction>
    <physiologicalReaction direction="right-to-left" evidence="2">
        <dbReference type="Rhea" id="RHEA:23446"/>
    </physiologicalReaction>
</comment>
<comment type="pathway">
    <text evidence="2">Fermentation; pyruvate fermentation to lactate; (S)-lactate from pyruvate: step 1/1.</text>
</comment>
<comment type="subunit">
    <text>Homotetramer.</text>
</comment>
<comment type="subcellular location">
    <subcellularLocation>
        <location evidence="1">Cytoplasm</location>
    </subcellularLocation>
</comment>
<comment type="polymorphism">
    <text>Isolates from various regions of the US and Canada show some variations. PubMed:8105474 has sequenced LDH-B isolates called Florida 1A, 1B, 2A and 2B; Georgia 2A and 2B; Maine 2A; New Jersey 121A, 121B, 137A, 137B and 197B; Nova Scotia 1A, 1B, 2A and 2B.</text>
</comment>
<comment type="similarity">
    <text evidence="3">Belongs to the LDH/MDH superfamily. LDH family.</text>
</comment>
<sequence>MSSVLQKLITPLASSSAEPPRNKVTVVGVGQVGMACAVSILLRDLCDELALVDVMEDRLKGEMMDLQHGLLFLKTSKVVADKDYAVTANSRLVVVTAGVRQQEGESRLNLVQRNVNVFKCIIPQIIKYSPNCTILVVSNPVDVLTYVTWKLSGLPKHRVIGSGTNLDSARFRYMMAERLGIHASAFNGWVLGEHGDTSVPVWSGANVAGVSLQKLNPEIGTDGDKEQWKATHKAVVDSAYEVIKLKGYTNWAIGFSVADLTESIVKNLSRVHPVSTMVKDMFGIGEEVFLSLPCVLNGSGVGSVVNMTLTDAEVAQLKKSADTLWGIQKDLKDL</sequence>
<accession>P20373</accession>
<gene>
    <name type="primary">ldhb</name>
</gene>
<name>LDHB_FUNHE</name>
<dbReference type="EC" id="1.1.1.27" evidence="2"/>
<dbReference type="EMBL" id="L23792">
    <property type="protein sequence ID" value="AAA49298.1"/>
    <property type="molecule type" value="Genomic_DNA"/>
</dbReference>
<dbReference type="EMBL" id="M33969">
    <property type="protein sequence ID" value="AAA49306.1"/>
    <property type="molecule type" value="mRNA"/>
</dbReference>
<dbReference type="EMBL" id="L23781">
    <property type="protein sequence ID" value="AAA49291.1"/>
    <property type="molecule type" value="Genomic_DNA"/>
</dbReference>
<dbReference type="EMBL" id="L23782">
    <property type="protein sequence ID" value="AAA49289.1"/>
    <property type="molecule type" value="Genomic_DNA"/>
</dbReference>
<dbReference type="EMBL" id="L23783">
    <property type="protein sequence ID" value="AAA49292.1"/>
    <property type="molecule type" value="Genomic_DNA"/>
</dbReference>
<dbReference type="EMBL" id="L23784">
    <property type="protein sequence ID" value="AAA49288.1"/>
    <property type="molecule type" value="Genomic_DNA"/>
</dbReference>
<dbReference type="EMBL" id="L23785">
    <property type="protein sequence ID" value="AAA49304.1"/>
    <property type="molecule type" value="Genomic_DNA"/>
</dbReference>
<dbReference type="EMBL" id="L23786">
    <property type="protein sequence ID" value="AAA49305.1"/>
    <property type="molecule type" value="Genomic_DNA"/>
</dbReference>
<dbReference type="EMBL" id="L23787">
    <property type="protein sequence ID" value="AAA49293.1"/>
    <property type="molecule type" value="Genomic_DNA"/>
</dbReference>
<dbReference type="EMBL" id="L23788">
    <property type="protein sequence ID" value="AAA49294.1"/>
    <property type="molecule type" value="Genomic_DNA"/>
</dbReference>
<dbReference type="EMBL" id="L23789">
    <property type="protein sequence ID" value="AAA49295.1"/>
    <property type="molecule type" value="Genomic_DNA"/>
</dbReference>
<dbReference type="EMBL" id="L23790">
    <property type="protein sequence ID" value="AAA49296.1"/>
    <property type="molecule type" value="Genomic_DNA"/>
</dbReference>
<dbReference type="EMBL" id="L23791">
    <property type="protein sequence ID" value="AAA49297.1"/>
    <property type="molecule type" value="Genomic_DNA"/>
</dbReference>
<dbReference type="EMBL" id="L23793">
    <property type="protein sequence ID" value="AAA49299.1"/>
    <property type="molecule type" value="Genomic_DNA"/>
</dbReference>
<dbReference type="EMBL" id="L23794">
    <property type="protein sequence ID" value="AAA49300.1"/>
    <property type="molecule type" value="Genomic_DNA"/>
</dbReference>
<dbReference type="EMBL" id="L23795">
    <property type="protein sequence ID" value="AAA49301.1"/>
    <property type="molecule type" value="Genomic_DNA"/>
</dbReference>
<dbReference type="EMBL" id="L23796">
    <property type="protein sequence ID" value="AAA49302.1"/>
    <property type="molecule type" value="Genomic_DNA"/>
</dbReference>
<dbReference type="EMBL" id="L23797">
    <property type="protein sequence ID" value="AAA49303.1"/>
    <property type="molecule type" value="Genomic_DNA"/>
</dbReference>
<dbReference type="PIR" id="A32430">
    <property type="entry name" value="A32430"/>
</dbReference>
<dbReference type="PIR" id="I50555">
    <property type="entry name" value="I50555"/>
</dbReference>
<dbReference type="RefSeq" id="NP_001296887.1">
    <property type="nucleotide sequence ID" value="NM_001309958.1"/>
</dbReference>
<dbReference type="SMR" id="P20373"/>
<dbReference type="STRING" id="8078.ENSFHEP00000012921"/>
<dbReference type="GeneID" id="105929819"/>
<dbReference type="CTD" id="30497"/>
<dbReference type="OrthoDB" id="5405561at2759"/>
<dbReference type="UniPathway" id="UPA00554">
    <property type="reaction ID" value="UER00611"/>
</dbReference>
<dbReference type="Proteomes" id="UP000265000">
    <property type="component" value="Whole Genome Shotgun Assembly"/>
</dbReference>
<dbReference type="GO" id="GO:0005737">
    <property type="term" value="C:cytoplasm"/>
    <property type="evidence" value="ECO:0007669"/>
    <property type="project" value="UniProtKB-SubCell"/>
</dbReference>
<dbReference type="GO" id="GO:0004459">
    <property type="term" value="F:L-lactate dehydrogenase activity"/>
    <property type="evidence" value="ECO:0007669"/>
    <property type="project" value="UniProtKB-EC"/>
</dbReference>
<dbReference type="GO" id="GO:0006089">
    <property type="term" value="P:lactate metabolic process"/>
    <property type="evidence" value="ECO:0007669"/>
    <property type="project" value="TreeGrafter"/>
</dbReference>
<dbReference type="CDD" id="cd05293">
    <property type="entry name" value="LDH_1"/>
    <property type="match status" value="1"/>
</dbReference>
<dbReference type="FunFam" id="3.40.50.720:FF:000029">
    <property type="entry name" value="L-lactate dehydrogenase A chain"/>
    <property type="match status" value="1"/>
</dbReference>
<dbReference type="FunFam" id="3.90.110.10:FF:000003">
    <property type="entry name" value="L-lactate dehydrogenase A chain"/>
    <property type="match status" value="1"/>
</dbReference>
<dbReference type="Gene3D" id="3.90.110.10">
    <property type="entry name" value="Lactate dehydrogenase/glycoside hydrolase, family 4, C-terminal"/>
    <property type="match status" value="1"/>
</dbReference>
<dbReference type="Gene3D" id="3.40.50.720">
    <property type="entry name" value="NAD(P)-binding Rossmann-like Domain"/>
    <property type="match status" value="1"/>
</dbReference>
<dbReference type="HAMAP" id="MF_00488">
    <property type="entry name" value="Lactate_dehydrog"/>
    <property type="match status" value="1"/>
</dbReference>
<dbReference type="InterPro" id="IPR001557">
    <property type="entry name" value="L-lactate/malate_DH"/>
</dbReference>
<dbReference type="InterPro" id="IPR011304">
    <property type="entry name" value="L-lactate_DH"/>
</dbReference>
<dbReference type="InterPro" id="IPR018177">
    <property type="entry name" value="L-lactate_DH_AS"/>
</dbReference>
<dbReference type="InterPro" id="IPR022383">
    <property type="entry name" value="Lactate/malate_DH_C"/>
</dbReference>
<dbReference type="InterPro" id="IPR001236">
    <property type="entry name" value="Lactate/malate_DH_N"/>
</dbReference>
<dbReference type="InterPro" id="IPR015955">
    <property type="entry name" value="Lactate_DH/Glyco_Ohase_4_C"/>
</dbReference>
<dbReference type="InterPro" id="IPR036291">
    <property type="entry name" value="NAD(P)-bd_dom_sf"/>
</dbReference>
<dbReference type="NCBIfam" id="TIGR01771">
    <property type="entry name" value="L-LDH-NAD"/>
    <property type="match status" value="1"/>
</dbReference>
<dbReference type="PANTHER" id="PTHR43128">
    <property type="entry name" value="L-2-HYDROXYCARBOXYLATE DEHYDROGENASE (NAD(P)(+))"/>
    <property type="match status" value="1"/>
</dbReference>
<dbReference type="PANTHER" id="PTHR43128:SF2">
    <property type="entry name" value="L-LACTATE DEHYDROGENASE B CHAIN"/>
    <property type="match status" value="1"/>
</dbReference>
<dbReference type="Pfam" id="PF02866">
    <property type="entry name" value="Ldh_1_C"/>
    <property type="match status" value="1"/>
</dbReference>
<dbReference type="Pfam" id="PF00056">
    <property type="entry name" value="Ldh_1_N"/>
    <property type="match status" value="1"/>
</dbReference>
<dbReference type="PIRSF" id="PIRSF000102">
    <property type="entry name" value="Lac_mal_DH"/>
    <property type="match status" value="1"/>
</dbReference>
<dbReference type="PRINTS" id="PR00086">
    <property type="entry name" value="LLDHDRGNASE"/>
</dbReference>
<dbReference type="SUPFAM" id="SSF56327">
    <property type="entry name" value="LDH C-terminal domain-like"/>
    <property type="match status" value="1"/>
</dbReference>
<dbReference type="SUPFAM" id="SSF51735">
    <property type="entry name" value="NAD(P)-binding Rossmann-fold domains"/>
    <property type="match status" value="1"/>
</dbReference>
<dbReference type="PROSITE" id="PS00064">
    <property type="entry name" value="L_LDH"/>
    <property type="match status" value="1"/>
</dbReference>
<organism>
    <name type="scientific">Fundulus heteroclitus</name>
    <name type="common">Killifish</name>
    <name type="synonym">Mummichog</name>
    <dbReference type="NCBI Taxonomy" id="8078"/>
    <lineage>
        <taxon>Eukaryota</taxon>
        <taxon>Metazoa</taxon>
        <taxon>Chordata</taxon>
        <taxon>Craniata</taxon>
        <taxon>Vertebrata</taxon>
        <taxon>Euteleostomi</taxon>
        <taxon>Actinopterygii</taxon>
        <taxon>Neopterygii</taxon>
        <taxon>Teleostei</taxon>
        <taxon>Neoteleostei</taxon>
        <taxon>Acanthomorphata</taxon>
        <taxon>Ovalentaria</taxon>
        <taxon>Atherinomorphae</taxon>
        <taxon>Cyprinodontiformes</taxon>
        <taxon>Fundulidae</taxon>
        <taxon>Fundulus</taxon>
    </lineage>
</organism>
<protein>
    <recommendedName>
        <fullName>L-lactate dehydrogenase B chain</fullName>
        <shortName>LDH-B</shortName>
        <ecNumber evidence="2">1.1.1.27</ecNumber>
    </recommendedName>
</protein>
<evidence type="ECO:0000250" key="1"/>
<evidence type="ECO:0000250" key="2">
    <source>
        <dbReference type="UniProtKB" id="P07195"/>
    </source>
</evidence>
<evidence type="ECO:0000305" key="3"/>
<keyword id="KW-0963">Cytoplasm</keyword>
<keyword id="KW-0520">NAD</keyword>
<keyword id="KW-0560">Oxidoreductase</keyword>
<reference key="1">
    <citation type="journal article" date="1989" name="Mol. Biol. Evol.">
        <title>Lactate dehydrogenase-B cDNA from the teleost Fundulus heteroclitus: evolutionary implications.</title>
        <authorList>
            <person name="Crawford D.L."/>
            <person name="Constantino H.R."/>
            <person name="Powers D.A."/>
        </authorList>
    </citation>
    <scope>NUCLEOTIDE SEQUENCE</scope>
</reference>
<reference key="2">
    <citation type="journal article" date="1993" name="Proc. Natl. Acad. Sci. U.S.A.">
        <title>Concordant mitochondrial and nuclear DNA phylogenies for populations of the teleost fish Fundulus heteroclitus.</title>
        <authorList>
            <person name="Bernardi G."/>
            <person name="Sordino P."/>
            <person name="Powers D.A."/>
        </authorList>
    </citation>
    <scope>NUCLEOTIDE SEQUENCE [GENOMIC DNA]</scope>
</reference>
<proteinExistence type="evidence at transcript level"/>